<evidence type="ECO:0000255" key="1"/>
<evidence type="ECO:0000256" key="2">
    <source>
        <dbReference type="SAM" id="MobiDB-lite"/>
    </source>
</evidence>
<evidence type="ECO:0000305" key="3"/>
<evidence type="ECO:0000312" key="4">
    <source>
        <dbReference type="EMBL" id="CAD86933.1"/>
    </source>
</evidence>
<evidence type="ECO:0000312" key="5">
    <source>
        <dbReference type="MGI" id="MGI:2668439"/>
    </source>
</evidence>
<dbReference type="EMBL" id="AJ554212">
    <property type="protein sequence ID" value="CAD86933.1"/>
    <property type="molecule type" value="mRNA"/>
</dbReference>
<dbReference type="EMBL" id="BC109332">
    <property type="protein sequence ID" value="AAI09333.1"/>
    <property type="molecule type" value="mRNA"/>
</dbReference>
<dbReference type="EMBL" id="BC141344">
    <property type="protein sequence ID" value="AAI41345.1"/>
    <property type="molecule type" value="mRNA"/>
</dbReference>
<dbReference type="EMBL" id="BC141345">
    <property type="protein sequence ID" value="AAI41346.1"/>
    <property type="molecule type" value="mRNA"/>
</dbReference>
<dbReference type="CCDS" id="CCDS15380.1"/>
<dbReference type="RefSeq" id="NP_839975.2">
    <property type="nucleotide sequence ID" value="NM_178244.3"/>
</dbReference>
<dbReference type="SMR" id="Q810U2"/>
<dbReference type="STRING" id="10090.ENSMUSP00000062098"/>
<dbReference type="GlyCosmos" id="Q810U2">
    <property type="glycosylation" value="1 site, No reported glycans"/>
</dbReference>
<dbReference type="GlyGen" id="Q810U2">
    <property type="glycosylation" value="1 site"/>
</dbReference>
<dbReference type="PaxDb" id="10090-ENSMUSP00000062098"/>
<dbReference type="ProteomicsDB" id="262845"/>
<dbReference type="GeneID" id="240819"/>
<dbReference type="KEGG" id="mmu:240819"/>
<dbReference type="AGR" id="MGI:2668439"/>
<dbReference type="CTD" id="240819"/>
<dbReference type="MGI" id="MGI:2668439">
    <property type="gene designation" value="Teddm1a"/>
</dbReference>
<dbReference type="eggNOG" id="ENOG502QS1R">
    <property type="taxonomic scope" value="Eukaryota"/>
</dbReference>
<dbReference type="InParanoid" id="Q810U2"/>
<dbReference type="OrthoDB" id="551896at2759"/>
<dbReference type="PhylomeDB" id="Q810U2"/>
<dbReference type="BioGRID-ORCS" id="240819">
    <property type="hits" value="3 hits in 76 CRISPR screens"/>
</dbReference>
<dbReference type="PRO" id="PR:Q810U2"/>
<dbReference type="Proteomes" id="UP000000589">
    <property type="component" value="Unplaced"/>
</dbReference>
<dbReference type="RNAct" id="Q810U2">
    <property type="molecule type" value="protein"/>
</dbReference>
<dbReference type="GO" id="GO:0016020">
    <property type="term" value="C:membrane"/>
    <property type="evidence" value="ECO:0007669"/>
    <property type="project" value="UniProtKB-SubCell"/>
</dbReference>
<dbReference type="InterPro" id="IPR006904">
    <property type="entry name" value="DUF716"/>
</dbReference>
<dbReference type="PANTHER" id="PTHR46441">
    <property type="entry name" value="TRANSMEMBRANE EPIDIDYMAL FAMILY MEMBER 3"/>
    <property type="match status" value="1"/>
</dbReference>
<dbReference type="PANTHER" id="PTHR46441:SF4">
    <property type="entry name" value="TRANSMEMBRANE EPIDIDYMAL PROTEIN 1A"/>
    <property type="match status" value="1"/>
</dbReference>
<dbReference type="Pfam" id="PF04819">
    <property type="entry name" value="DUF716"/>
    <property type="match status" value="1"/>
</dbReference>
<comment type="subcellular location">
    <subcellularLocation>
        <location evidence="3">Membrane</location>
        <topology evidence="3">Multi-pass membrane protein</topology>
    </subcellularLocation>
</comment>
<comment type="similarity">
    <text evidence="3">Belongs to the TMEM45 family.</text>
</comment>
<protein>
    <recommendedName>
        <fullName evidence="5">Transmembrane epididymal protein 1A</fullName>
    </recommendedName>
    <alternativeName>
        <fullName evidence="4">Transmembrane epididymal protein 1-1</fullName>
    </alternativeName>
</protein>
<feature type="chain" id="PRO_0000307130" description="Transmembrane epididymal protein 1A" evidence="3">
    <location>
        <begin position="1"/>
        <end position="305"/>
    </location>
</feature>
<feature type="transmembrane region" description="Helical" evidence="1">
    <location>
        <begin position="4"/>
        <end position="24"/>
    </location>
</feature>
<feature type="transmembrane region" description="Helical" evidence="1">
    <location>
        <begin position="54"/>
        <end position="74"/>
    </location>
</feature>
<feature type="transmembrane region" description="Helical" evidence="1">
    <location>
        <begin position="124"/>
        <end position="144"/>
    </location>
</feature>
<feature type="transmembrane region" description="Helical" evidence="1">
    <location>
        <begin position="159"/>
        <end position="179"/>
    </location>
</feature>
<feature type="transmembrane region" description="Helical" evidence="1">
    <location>
        <begin position="187"/>
        <end position="207"/>
    </location>
</feature>
<feature type="transmembrane region" description="Helical" evidence="1">
    <location>
        <begin position="223"/>
        <end position="243"/>
    </location>
</feature>
<feature type="region of interest" description="Disordered" evidence="2">
    <location>
        <begin position="285"/>
        <end position="305"/>
    </location>
</feature>
<feature type="glycosylation site" description="N-linked (GlcNAc...) asparagine" evidence="1">
    <location>
        <position position="32"/>
    </location>
</feature>
<feature type="sequence conflict" description="In Ref. 2; AAI09333." evidence="3" ref="2">
    <original>V</original>
    <variation>M</variation>
    <location>
        <position position="119"/>
    </location>
</feature>
<feature type="sequence conflict" description="In Ref. 2; AAI09333." evidence="3" ref="2">
    <original>P</original>
    <variation>L</variation>
    <location>
        <position position="261"/>
    </location>
</feature>
<sequence length="305" mass="34794">MGDFIGHISPGLFLVFYGLYQAVIVSRAVIFNDSLLYPSYLSKNKGKWARLWKIAHAGWLKVVIGSLLIVYEISCVKEGLTLMTKGVPPRFMYPKEWQHLTMFFLLTLDGCVEMVSKNVLRQRCVLLERGATVLGVYVLLLLLVSHVKESSGVELQVHSLLILVVFLLMLVLTAELWAPEMFHLWMIETFLILIMGSWLIQAAFILFRPVSGFPWEDDDISDIMFVTTFFCWHVMINALCMLGIYGVSSFWHRCYSPSLRPMGSKEALYQESSSGTFYKLLQEAEQQDKDDQAPLLSKISPCDRA</sequence>
<name>TDM1A_MOUSE</name>
<gene>
    <name evidence="5" type="primary">Teddm1a</name>
    <name type="synonym">Epdd1</name>
    <name evidence="4" type="synonym">Teddm1</name>
    <name evidence="4" type="synonym">Teddm1-1</name>
</gene>
<proteinExistence type="evidence at transcript level"/>
<accession>Q810U2</accession>
<accession>B9EJ62</accession>
<accession>Q2VP90</accession>
<keyword id="KW-0325">Glycoprotein</keyword>
<keyword id="KW-0472">Membrane</keyword>
<keyword id="KW-1185">Reference proteome</keyword>
<keyword id="KW-0812">Transmembrane</keyword>
<keyword id="KW-1133">Transmembrane helix</keyword>
<organism>
    <name type="scientific">Mus musculus</name>
    <name type="common">Mouse</name>
    <dbReference type="NCBI Taxonomy" id="10090"/>
    <lineage>
        <taxon>Eukaryota</taxon>
        <taxon>Metazoa</taxon>
        <taxon>Chordata</taxon>
        <taxon>Craniata</taxon>
        <taxon>Vertebrata</taxon>
        <taxon>Euteleostomi</taxon>
        <taxon>Mammalia</taxon>
        <taxon>Eutheria</taxon>
        <taxon>Euarchontoglires</taxon>
        <taxon>Glires</taxon>
        <taxon>Rodentia</taxon>
        <taxon>Myomorpha</taxon>
        <taxon>Muroidea</taxon>
        <taxon>Muridae</taxon>
        <taxon>Murinae</taxon>
        <taxon>Mus</taxon>
        <taxon>Mus</taxon>
    </lineage>
</organism>
<reference key="1">
    <citation type="submission" date="2003-02" db="EMBL/GenBank/DDBJ databases">
        <title>Novel epididymis-specific mRNAs down-regulated by HE6/Gpr64 receptor gene disruption.</title>
        <authorList>
            <person name="Davies B."/>
            <person name="Davies M."/>
            <person name="Obermann H."/>
            <person name="Spiess A.N."/>
            <person name="Kirchhoff C."/>
        </authorList>
    </citation>
    <scope>NUCLEOTIDE SEQUENCE [MRNA]</scope>
    <source>
        <strain>NMRI</strain>
        <tissue>Epididymis</tissue>
    </source>
</reference>
<reference key="2">
    <citation type="journal article" date="2004" name="Genome Res.">
        <title>The status, quality, and expansion of the NIH full-length cDNA project: the Mammalian Gene Collection (MGC).</title>
        <authorList>
            <consortium name="The MGC Project Team"/>
        </authorList>
    </citation>
    <scope>NUCLEOTIDE SEQUENCE [LARGE SCALE MRNA]</scope>
    <source>
        <tissue>Brain</tissue>
    </source>
</reference>